<proteinExistence type="inferred from homology"/>
<dbReference type="EC" id="3.6.1.9" evidence="1"/>
<dbReference type="EMBL" id="CP000115">
    <property type="protein sequence ID" value="ABA03544.1"/>
    <property type="molecule type" value="Genomic_DNA"/>
</dbReference>
<dbReference type="RefSeq" id="WP_011313610.1">
    <property type="nucleotide sequence ID" value="NC_007406.1"/>
</dbReference>
<dbReference type="SMR" id="Q3SVZ7"/>
<dbReference type="STRING" id="323098.Nwi_0277"/>
<dbReference type="KEGG" id="nwi:Nwi_0277"/>
<dbReference type="eggNOG" id="COG0424">
    <property type="taxonomic scope" value="Bacteria"/>
</dbReference>
<dbReference type="HOGENOM" id="CLU_040416_2_0_5"/>
<dbReference type="OrthoDB" id="9807767at2"/>
<dbReference type="Proteomes" id="UP000002531">
    <property type="component" value="Chromosome"/>
</dbReference>
<dbReference type="GO" id="GO:0005737">
    <property type="term" value="C:cytoplasm"/>
    <property type="evidence" value="ECO:0007669"/>
    <property type="project" value="UniProtKB-SubCell"/>
</dbReference>
<dbReference type="GO" id="GO:0036218">
    <property type="term" value="F:dTTP diphosphatase activity"/>
    <property type="evidence" value="ECO:0007669"/>
    <property type="project" value="RHEA"/>
</dbReference>
<dbReference type="GO" id="GO:0036221">
    <property type="term" value="F:UTP diphosphatase activity"/>
    <property type="evidence" value="ECO:0007669"/>
    <property type="project" value="RHEA"/>
</dbReference>
<dbReference type="GO" id="GO:0009117">
    <property type="term" value="P:nucleotide metabolic process"/>
    <property type="evidence" value="ECO:0007669"/>
    <property type="project" value="UniProtKB-KW"/>
</dbReference>
<dbReference type="CDD" id="cd00555">
    <property type="entry name" value="Maf"/>
    <property type="match status" value="1"/>
</dbReference>
<dbReference type="FunFam" id="3.90.950.10:FF:000005">
    <property type="entry name" value="7-methyl-GTP pyrophosphatase"/>
    <property type="match status" value="1"/>
</dbReference>
<dbReference type="Gene3D" id="3.90.950.10">
    <property type="match status" value="1"/>
</dbReference>
<dbReference type="HAMAP" id="MF_00528">
    <property type="entry name" value="Maf"/>
    <property type="match status" value="1"/>
</dbReference>
<dbReference type="InterPro" id="IPR029001">
    <property type="entry name" value="ITPase-like_fam"/>
</dbReference>
<dbReference type="InterPro" id="IPR003697">
    <property type="entry name" value="Maf-like"/>
</dbReference>
<dbReference type="NCBIfam" id="TIGR00172">
    <property type="entry name" value="maf"/>
    <property type="match status" value="1"/>
</dbReference>
<dbReference type="NCBIfam" id="NF002401">
    <property type="entry name" value="PRK01441.1"/>
    <property type="match status" value="1"/>
</dbReference>
<dbReference type="PANTHER" id="PTHR43213">
    <property type="entry name" value="BIFUNCTIONAL DTTP/UTP PYROPHOSPHATASE/METHYLTRANSFERASE PROTEIN-RELATED"/>
    <property type="match status" value="1"/>
</dbReference>
<dbReference type="PANTHER" id="PTHR43213:SF5">
    <property type="entry name" value="BIFUNCTIONAL DTTP_UTP PYROPHOSPHATASE_METHYLTRANSFERASE PROTEIN-RELATED"/>
    <property type="match status" value="1"/>
</dbReference>
<dbReference type="Pfam" id="PF02545">
    <property type="entry name" value="Maf"/>
    <property type="match status" value="1"/>
</dbReference>
<dbReference type="PIRSF" id="PIRSF006305">
    <property type="entry name" value="Maf"/>
    <property type="match status" value="1"/>
</dbReference>
<dbReference type="SUPFAM" id="SSF52972">
    <property type="entry name" value="ITPase-like"/>
    <property type="match status" value="1"/>
</dbReference>
<name>NTPPA_NITWN</name>
<reference key="1">
    <citation type="journal article" date="2006" name="Appl. Environ. Microbiol.">
        <title>Genome sequence of the chemolithoautotrophic nitrite-oxidizing bacterium Nitrobacter winogradskyi Nb-255.</title>
        <authorList>
            <person name="Starkenburg S.R."/>
            <person name="Chain P.S.G."/>
            <person name="Sayavedra-Soto L.A."/>
            <person name="Hauser L."/>
            <person name="Land M.L."/>
            <person name="Larimer F.W."/>
            <person name="Malfatti S.A."/>
            <person name="Klotz M.G."/>
            <person name="Bottomley P.J."/>
            <person name="Arp D.J."/>
            <person name="Hickey W.J."/>
        </authorList>
    </citation>
    <scope>NUCLEOTIDE SEQUENCE [LARGE SCALE GENOMIC DNA]</scope>
    <source>
        <strain>ATCC 25391 / DSM 10237 / CIP 104748 / NCIMB 11846 / Nb-255</strain>
    </source>
</reference>
<gene>
    <name type="ordered locus">Nwi_0277</name>
</gene>
<feature type="chain" id="PRO_0000267354" description="dTTP/UTP pyrophosphatase">
    <location>
        <begin position="1"/>
        <end position="207"/>
    </location>
</feature>
<feature type="active site" description="Proton acceptor" evidence="1">
    <location>
        <position position="79"/>
    </location>
</feature>
<feature type="site" description="Important for substrate specificity" evidence="1">
    <location>
        <position position="15"/>
    </location>
</feature>
<feature type="site" description="Important for substrate specificity" evidence="1">
    <location>
        <position position="80"/>
    </location>
</feature>
<feature type="site" description="Important for substrate specificity" evidence="1">
    <location>
        <position position="163"/>
    </location>
</feature>
<accession>Q3SVZ7</accession>
<keyword id="KW-0963">Cytoplasm</keyword>
<keyword id="KW-0378">Hydrolase</keyword>
<keyword id="KW-0546">Nucleotide metabolism</keyword>
<keyword id="KW-1185">Reference proteome</keyword>
<comment type="function">
    <text evidence="1">Nucleoside triphosphate pyrophosphatase that hydrolyzes dTTP and UTP. May have a dual role in cell division arrest and in preventing the incorporation of modified nucleotides into cellular nucleic acids.</text>
</comment>
<comment type="catalytic activity">
    <reaction evidence="1">
        <text>dTTP + H2O = dTMP + diphosphate + H(+)</text>
        <dbReference type="Rhea" id="RHEA:28534"/>
        <dbReference type="ChEBI" id="CHEBI:15377"/>
        <dbReference type="ChEBI" id="CHEBI:15378"/>
        <dbReference type="ChEBI" id="CHEBI:33019"/>
        <dbReference type="ChEBI" id="CHEBI:37568"/>
        <dbReference type="ChEBI" id="CHEBI:63528"/>
        <dbReference type="EC" id="3.6.1.9"/>
    </reaction>
</comment>
<comment type="catalytic activity">
    <reaction evidence="1">
        <text>UTP + H2O = UMP + diphosphate + H(+)</text>
        <dbReference type="Rhea" id="RHEA:29395"/>
        <dbReference type="ChEBI" id="CHEBI:15377"/>
        <dbReference type="ChEBI" id="CHEBI:15378"/>
        <dbReference type="ChEBI" id="CHEBI:33019"/>
        <dbReference type="ChEBI" id="CHEBI:46398"/>
        <dbReference type="ChEBI" id="CHEBI:57865"/>
        <dbReference type="EC" id="3.6.1.9"/>
    </reaction>
</comment>
<comment type="cofactor">
    <cofactor evidence="1">
        <name>a divalent metal cation</name>
        <dbReference type="ChEBI" id="CHEBI:60240"/>
    </cofactor>
</comment>
<comment type="subcellular location">
    <subcellularLocation>
        <location evidence="1">Cytoplasm</location>
    </subcellularLocation>
</comment>
<comment type="similarity">
    <text evidence="1">Belongs to the Maf family. YhdE subfamily.</text>
</comment>
<evidence type="ECO:0000255" key="1">
    <source>
        <dbReference type="HAMAP-Rule" id="MF_00528"/>
    </source>
</evidence>
<organism>
    <name type="scientific">Nitrobacter winogradskyi (strain ATCC 25391 / DSM 10237 / CIP 104748 / NCIMB 11846 / Nb-255)</name>
    <dbReference type="NCBI Taxonomy" id="323098"/>
    <lineage>
        <taxon>Bacteria</taxon>
        <taxon>Pseudomonadati</taxon>
        <taxon>Pseudomonadota</taxon>
        <taxon>Alphaproteobacteria</taxon>
        <taxon>Hyphomicrobiales</taxon>
        <taxon>Nitrobacteraceae</taxon>
        <taxon>Nitrobacter</taxon>
    </lineage>
</organism>
<protein>
    <recommendedName>
        <fullName evidence="1">dTTP/UTP pyrophosphatase</fullName>
        <shortName evidence="1">dTTPase/UTPase</shortName>
        <ecNumber evidence="1">3.6.1.9</ecNumber>
    </recommendedName>
    <alternativeName>
        <fullName evidence="1">Nucleoside triphosphate pyrophosphatase</fullName>
    </alternativeName>
    <alternativeName>
        <fullName evidence="1">Nucleotide pyrophosphatase</fullName>
        <shortName evidence="1">Nucleotide PPase</shortName>
    </alternativeName>
</protein>
<sequence length="207" mass="22404">MSGRPKLVLASGSPRRLSLLNQAGIEPDALRPVDIDETPTKGELPRACANRLARAKADAALRALQIDDELRGSFILAADTVVAVGRRILPKADLVDEASQCLRLLSGRNHRVYTAVCLVTPKENFRQRLVETRVRFKRLSEEDIQAYIGSGEWRGKAGGYAIQGIAGSFVVKLVGSYTNVVGLPLNESIALLGGEEFPIRAGWLDAG</sequence>